<gene>
    <name evidence="1" type="primary">rihC</name>
    <name type="ordered locus">ECH74115_0032</name>
</gene>
<evidence type="ECO:0000255" key="1">
    <source>
        <dbReference type="HAMAP-Rule" id="MF_01432"/>
    </source>
</evidence>
<accession>B5YYC2</accession>
<organism>
    <name type="scientific">Escherichia coli O157:H7 (strain EC4115 / EHEC)</name>
    <dbReference type="NCBI Taxonomy" id="444450"/>
    <lineage>
        <taxon>Bacteria</taxon>
        <taxon>Pseudomonadati</taxon>
        <taxon>Pseudomonadota</taxon>
        <taxon>Gammaproteobacteria</taxon>
        <taxon>Enterobacterales</taxon>
        <taxon>Enterobacteriaceae</taxon>
        <taxon>Escherichia</taxon>
    </lineage>
</organism>
<dbReference type="EC" id="3.2.-.-" evidence="1"/>
<dbReference type="EMBL" id="CP001164">
    <property type="protein sequence ID" value="ACI39179.1"/>
    <property type="molecule type" value="Genomic_DNA"/>
</dbReference>
<dbReference type="RefSeq" id="WP_001239143.1">
    <property type="nucleotide sequence ID" value="NC_011353.1"/>
</dbReference>
<dbReference type="SMR" id="B5YYC2"/>
<dbReference type="KEGG" id="ecf:ECH74115_0032"/>
<dbReference type="HOGENOM" id="CLU_036838_2_2_6"/>
<dbReference type="GO" id="GO:0005829">
    <property type="term" value="C:cytosol"/>
    <property type="evidence" value="ECO:0007669"/>
    <property type="project" value="TreeGrafter"/>
</dbReference>
<dbReference type="GO" id="GO:0008477">
    <property type="term" value="F:purine nucleosidase activity"/>
    <property type="evidence" value="ECO:0007669"/>
    <property type="project" value="TreeGrafter"/>
</dbReference>
<dbReference type="GO" id="GO:0045437">
    <property type="term" value="F:uridine nucleosidase activity"/>
    <property type="evidence" value="ECO:0007669"/>
    <property type="project" value="UniProtKB-ARBA"/>
</dbReference>
<dbReference type="GO" id="GO:0006144">
    <property type="term" value="P:purine nucleobase metabolic process"/>
    <property type="evidence" value="ECO:0007669"/>
    <property type="project" value="UniProtKB-UniRule"/>
</dbReference>
<dbReference type="GO" id="GO:0006152">
    <property type="term" value="P:purine nucleoside catabolic process"/>
    <property type="evidence" value="ECO:0007669"/>
    <property type="project" value="TreeGrafter"/>
</dbReference>
<dbReference type="GO" id="GO:0006206">
    <property type="term" value="P:pyrimidine nucleobase metabolic process"/>
    <property type="evidence" value="ECO:0007669"/>
    <property type="project" value="UniProtKB-UniRule"/>
</dbReference>
<dbReference type="CDD" id="cd02651">
    <property type="entry name" value="nuc_hydro_IU_UC_XIUA"/>
    <property type="match status" value="1"/>
</dbReference>
<dbReference type="FunFam" id="3.90.245.10:FF:000002">
    <property type="entry name" value="Non-specific ribonucleoside hydrolase RihC"/>
    <property type="match status" value="1"/>
</dbReference>
<dbReference type="Gene3D" id="3.90.245.10">
    <property type="entry name" value="Ribonucleoside hydrolase-like"/>
    <property type="match status" value="1"/>
</dbReference>
<dbReference type="HAMAP" id="MF_01432">
    <property type="entry name" value="Nucleosid_hydro_RihC"/>
    <property type="match status" value="1"/>
</dbReference>
<dbReference type="InterPro" id="IPR015910">
    <property type="entry name" value="I/U_nuclsd_hydro_CS"/>
</dbReference>
<dbReference type="InterPro" id="IPR001910">
    <property type="entry name" value="Inosine/uridine_hydrolase_dom"/>
</dbReference>
<dbReference type="InterPro" id="IPR023186">
    <property type="entry name" value="IUNH"/>
</dbReference>
<dbReference type="InterPro" id="IPR022976">
    <property type="entry name" value="Nucleosid_hydro_RihC_nonspecif"/>
</dbReference>
<dbReference type="InterPro" id="IPR036452">
    <property type="entry name" value="Ribo_hydro-like"/>
</dbReference>
<dbReference type="NCBIfam" id="NF008036">
    <property type="entry name" value="PRK10768.1"/>
    <property type="match status" value="1"/>
</dbReference>
<dbReference type="PANTHER" id="PTHR12304">
    <property type="entry name" value="INOSINE-URIDINE PREFERRING NUCLEOSIDE HYDROLASE"/>
    <property type="match status" value="1"/>
</dbReference>
<dbReference type="PANTHER" id="PTHR12304:SF15">
    <property type="entry name" value="NON-SPECIFIC RIBONUCLEOSIDE HYDROLASE RIHC"/>
    <property type="match status" value="1"/>
</dbReference>
<dbReference type="Pfam" id="PF01156">
    <property type="entry name" value="IU_nuc_hydro"/>
    <property type="match status" value="1"/>
</dbReference>
<dbReference type="SUPFAM" id="SSF53590">
    <property type="entry name" value="Nucleoside hydrolase"/>
    <property type="match status" value="1"/>
</dbReference>
<dbReference type="PROSITE" id="PS01247">
    <property type="entry name" value="IUNH"/>
    <property type="match status" value="1"/>
</dbReference>
<reference key="1">
    <citation type="journal article" date="2011" name="Proc. Natl. Acad. Sci. U.S.A.">
        <title>Genomic anatomy of Escherichia coli O157:H7 outbreaks.</title>
        <authorList>
            <person name="Eppinger M."/>
            <person name="Mammel M.K."/>
            <person name="Leclerc J.E."/>
            <person name="Ravel J."/>
            <person name="Cebula T.A."/>
        </authorList>
    </citation>
    <scope>NUCLEOTIDE SEQUENCE [LARGE SCALE GENOMIC DNA]</scope>
    <source>
        <strain>EC4115 / EHEC</strain>
    </source>
</reference>
<feature type="chain" id="PRO_1000145809" description="Non-specific ribonucleoside hydrolase RihC">
    <location>
        <begin position="1"/>
        <end position="304"/>
    </location>
</feature>
<feature type="active site" evidence="1">
    <location>
        <position position="233"/>
    </location>
</feature>
<comment type="function">
    <text evidence="1">Hydrolyzes both purine and pyrimidine ribonucleosides with a broad-substrate specificity.</text>
</comment>
<comment type="similarity">
    <text evidence="1">Belongs to the IUNH family. RihC subfamily.</text>
</comment>
<name>RIHC_ECO5E</name>
<protein>
    <recommendedName>
        <fullName evidence="1">Non-specific ribonucleoside hydrolase RihC</fullName>
        <ecNumber evidence="1">3.2.-.-</ecNumber>
    </recommendedName>
    <alternativeName>
        <fullName evidence="1">Purine/pyrimidine ribonucleoside hydrolase</fullName>
    </alternativeName>
</protein>
<proteinExistence type="inferred from homology"/>
<keyword id="KW-0326">Glycosidase</keyword>
<keyword id="KW-0378">Hydrolase</keyword>
<sequence>MRLPIFLDTDPGIDDAVAIAAAIFAPELDLQLMTTVAGNVSVEKTTRNALQLLHFWNAEIPLAQGAAVPLVRAPRDAASVHGESGMAGYDFVEHNRKPLGIPAFLAIRDALMRAPEPVTLVAIGPLTNIALLLSQCPECKPYIRRLVIMGGSAGRGNCTPNAEFNIAADPEAAACVFRSGIEIVMCGLDVTNQAILTPDYLSTLPQLNRTGKMLHALFSHYRSGSMQSGLRMHDLCAIAWLVRPDLFTLKPCFVAVETQGEFTSGTTVVDIDGCLGKPANVQVALDLNVKGFQQWVAEVLALVP</sequence>